<dbReference type="EMBL" id="AE005674">
    <property type="protein sequence ID" value="AAN43283.1"/>
    <property type="molecule type" value="Genomic_DNA"/>
</dbReference>
<dbReference type="EMBL" id="AE014073">
    <property type="protein sequence ID" value="AAP17171.1"/>
    <property type="molecule type" value="Genomic_DNA"/>
</dbReference>
<dbReference type="RefSeq" id="NP_707576.1">
    <property type="nucleotide sequence ID" value="NC_004337.2"/>
</dbReference>
<dbReference type="RefSeq" id="WP_000648420.1">
    <property type="nucleotide sequence ID" value="NZ_WPGW01000073.1"/>
</dbReference>
<dbReference type="SMR" id="P69780"/>
<dbReference type="STRING" id="198214.SF1706"/>
<dbReference type="PaxDb" id="198214-SF1706"/>
<dbReference type="GeneID" id="1024897"/>
<dbReference type="GeneID" id="93775832"/>
<dbReference type="KEGG" id="sfl:SF1706"/>
<dbReference type="KEGG" id="sfx:S1839"/>
<dbReference type="PATRIC" id="fig|198214.7.peg.2019"/>
<dbReference type="HOGENOM" id="CLU_166934_2_1_6"/>
<dbReference type="Proteomes" id="UP000001006">
    <property type="component" value="Chromosome"/>
</dbReference>
<dbReference type="Proteomes" id="UP000002673">
    <property type="component" value="Chromosome"/>
</dbReference>
<dbReference type="GO" id="GO:0009279">
    <property type="term" value="C:cell outer membrane"/>
    <property type="evidence" value="ECO:0007669"/>
    <property type="project" value="UniProtKB-SubCell"/>
</dbReference>
<dbReference type="GO" id="GO:0005576">
    <property type="term" value="C:extracellular region"/>
    <property type="evidence" value="ECO:0007669"/>
    <property type="project" value="UniProtKB-KW"/>
</dbReference>
<dbReference type="GO" id="GO:0008289">
    <property type="term" value="F:lipid binding"/>
    <property type="evidence" value="ECO:0007669"/>
    <property type="project" value="UniProtKB-UniRule"/>
</dbReference>
<dbReference type="GO" id="GO:0042834">
    <property type="term" value="F:peptidoglycan binding"/>
    <property type="evidence" value="ECO:0007669"/>
    <property type="project" value="UniProtKB-UniRule"/>
</dbReference>
<dbReference type="GO" id="GO:0030258">
    <property type="term" value="P:lipid modification"/>
    <property type="evidence" value="ECO:0007669"/>
    <property type="project" value="UniProtKB-UniRule"/>
</dbReference>
<dbReference type="GO" id="GO:0043580">
    <property type="term" value="P:periplasmic space organization"/>
    <property type="evidence" value="ECO:0007669"/>
    <property type="project" value="UniProtKB-UniRule"/>
</dbReference>
<dbReference type="FunFam" id="1.20.5.190:FF:000002">
    <property type="entry name" value="Major outer membrane lipoprotein"/>
    <property type="match status" value="1"/>
</dbReference>
<dbReference type="Gene3D" id="1.20.5.190">
    <property type="match status" value="1"/>
</dbReference>
<dbReference type="HAMAP" id="MF_00843">
    <property type="entry name" value="Lpp"/>
    <property type="match status" value="1"/>
</dbReference>
<dbReference type="InterPro" id="IPR006817">
    <property type="entry name" value="Lipoprotein_leucine-zipper_dom"/>
</dbReference>
<dbReference type="InterPro" id="IPR016367">
    <property type="entry name" value="MOM_Lpp"/>
</dbReference>
<dbReference type="NCBIfam" id="NF040598">
    <property type="entry name" value="Ala_zip_lipo"/>
    <property type="match status" value="1"/>
</dbReference>
<dbReference type="NCBIfam" id="NF011925">
    <property type="entry name" value="PRK15396.1"/>
    <property type="match status" value="1"/>
</dbReference>
<dbReference type="PANTHER" id="PTHR38763:SF1">
    <property type="entry name" value="MAJOR OUTER MEMBRANE LIPOPROTEIN LPP"/>
    <property type="match status" value="1"/>
</dbReference>
<dbReference type="PANTHER" id="PTHR38763">
    <property type="entry name" value="MAJOR OUTER MEMBRANE PROLIPOPROTEIN LPP"/>
    <property type="match status" value="1"/>
</dbReference>
<dbReference type="Pfam" id="PF04728">
    <property type="entry name" value="LPP"/>
    <property type="match status" value="1"/>
</dbReference>
<dbReference type="PIRSF" id="PIRSF002855">
    <property type="entry name" value="Murein-lipoprotein"/>
    <property type="match status" value="1"/>
</dbReference>
<dbReference type="SUPFAM" id="SSF58042">
    <property type="entry name" value="Outer membrane lipoprotein"/>
    <property type="match status" value="1"/>
</dbReference>
<dbReference type="PROSITE" id="PS51257">
    <property type="entry name" value="PROKAR_LIPOPROTEIN"/>
    <property type="match status" value="1"/>
</dbReference>
<organism>
    <name type="scientific">Shigella flexneri</name>
    <dbReference type="NCBI Taxonomy" id="623"/>
    <lineage>
        <taxon>Bacteria</taxon>
        <taxon>Pseudomonadati</taxon>
        <taxon>Pseudomonadota</taxon>
        <taxon>Gammaproteobacteria</taxon>
        <taxon>Enterobacterales</taxon>
        <taxon>Enterobacteriaceae</taxon>
        <taxon>Shigella</taxon>
    </lineage>
</organism>
<protein>
    <recommendedName>
        <fullName evidence="1">Major outer membrane lipoprotein Lpp</fullName>
    </recommendedName>
</protein>
<comment type="function">
    <text evidence="1">A highly abundant outer membrane lipoprotein that controls the distance between the inner and outer membranes. The only protein known to be covalently linked to the peptidoglycan network (PGN). Also non-covalently binds the PGN. The link between the cell outer membrane and PGN contributes to maintenance of the structural and functional integrity of the cell envelope, and maintains the correct distance between the PGN and the outer membrane.</text>
</comment>
<comment type="subunit">
    <text evidence="1">Homotrimer.</text>
</comment>
<comment type="subcellular location">
    <subcellularLocation>
        <location evidence="1">Cell outer membrane</location>
        <topology evidence="1">Lipid-anchor</topology>
        <orientation evidence="1">Periplasmic side</orientation>
    </subcellularLocation>
    <subcellularLocation>
        <location evidence="1">Secreted</location>
        <location evidence="1">Cell wall</location>
        <topology evidence="1">Peptidoglycan-anchor</topology>
    </subcellularLocation>
    <text evidence="1">Attached via its lipidated N-terminus to the inner leaflet of the outer membrane. Attached to the peptidoglycan network (PGN) via its C-terminus.</text>
</comment>
<comment type="similarity">
    <text evidence="1">Belongs to the Lpp family.</text>
</comment>
<feature type="signal peptide" evidence="1">
    <location>
        <begin position="1"/>
        <end position="20"/>
    </location>
</feature>
<feature type="chain" id="PRO_0000018347" description="Major outer membrane lipoprotein Lpp" evidence="1">
    <location>
        <begin position="21"/>
        <end position="78"/>
    </location>
</feature>
<feature type="repeat" evidence="1">
    <location>
        <begin position="24"/>
        <end position="34"/>
    </location>
</feature>
<feature type="repeat" evidence="1">
    <location>
        <begin position="38"/>
        <end position="48"/>
    </location>
</feature>
<feature type="coiled-coil region" evidence="1">
    <location>
        <begin position="27"/>
        <end position="75"/>
    </location>
</feature>
<feature type="modified residue" description="N6-murein peptidoglycan lysine" evidence="1">
    <location>
        <position position="78"/>
    </location>
</feature>
<feature type="lipid moiety-binding region" description="N-palmitoyl cysteine" evidence="1">
    <location>
        <position position="21"/>
    </location>
</feature>
<feature type="lipid moiety-binding region" description="S-diacylglycerol cysteine" evidence="1">
    <location>
        <position position="21"/>
    </location>
</feature>
<proteinExistence type="inferred from homology"/>
<sequence length="78" mass="8323">MKATKLVLGAVILGSTLLAGCSSNAKIDQLSSDVQTLNAKVDQLSNDVNAMRSDVQAAKDDAARANQRLDNMATKYRK</sequence>
<evidence type="ECO:0000255" key="1">
    <source>
        <dbReference type="HAMAP-Rule" id="MF_00843"/>
    </source>
</evidence>
<accession>P69780</accession>
<accession>P02937</accession>
<reference key="1">
    <citation type="journal article" date="2002" name="Nucleic Acids Res.">
        <title>Genome sequence of Shigella flexneri 2a: insights into pathogenicity through comparison with genomes of Escherichia coli K12 and O157.</title>
        <authorList>
            <person name="Jin Q."/>
            <person name="Yuan Z."/>
            <person name="Xu J."/>
            <person name="Wang Y."/>
            <person name="Shen Y."/>
            <person name="Lu W."/>
            <person name="Wang J."/>
            <person name="Liu H."/>
            <person name="Yang J."/>
            <person name="Yang F."/>
            <person name="Zhang X."/>
            <person name="Zhang J."/>
            <person name="Yang G."/>
            <person name="Wu H."/>
            <person name="Qu D."/>
            <person name="Dong J."/>
            <person name="Sun L."/>
            <person name="Xue Y."/>
            <person name="Zhao A."/>
            <person name="Gao Y."/>
            <person name="Zhu J."/>
            <person name="Kan B."/>
            <person name="Ding K."/>
            <person name="Chen S."/>
            <person name="Cheng H."/>
            <person name="Yao Z."/>
            <person name="He B."/>
            <person name="Chen R."/>
            <person name="Ma D."/>
            <person name="Qiang B."/>
            <person name="Wen Y."/>
            <person name="Hou Y."/>
            <person name="Yu J."/>
        </authorList>
    </citation>
    <scope>NUCLEOTIDE SEQUENCE [LARGE SCALE GENOMIC DNA]</scope>
    <source>
        <strain>301 / Serotype 2a</strain>
    </source>
</reference>
<reference key="2">
    <citation type="journal article" date="2003" name="Infect. Immun.">
        <title>Complete genome sequence and comparative genomics of Shigella flexneri serotype 2a strain 2457T.</title>
        <authorList>
            <person name="Wei J."/>
            <person name="Goldberg M.B."/>
            <person name="Burland V."/>
            <person name="Venkatesan M.M."/>
            <person name="Deng W."/>
            <person name="Fournier G."/>
            <person name="Mayhew G.F."/>
            <person name="Plunkett G. III"/>
            <person name="Rose D.J."/>
            <person name="Darling A."/>
            <person name="Mau B."/>
            <person name="Perna N.T."/>
            <person name="Payne S.M."/>
            <person name="Runyen-Janecky L.J."/>
            <person name="Zhou S."/>
            <person name="Schwartz D.C."/>
            <person name="Blattner F.R."/>
        </authorList>
    </citation>
    <scope>NUCLEOTIDE SEQUENCE [LARGE SCALE GENOMIC DNA]</scope>
    <source>
        <strain>ATCC 700930 / 2457T / Serotype 2a</strain>
    </source>
</reference>
<gene>
    <name evidence="1" type="primary">lpp</name>
    <name type="ordered locus">SF1706</name>
    <name type="ordered locus">S1839</name>
</gene>
<name>LPP_SHIFL</name>
<keyword id="KW-0998">Cell outer membrane</keyword>
<keyword id="KW-0134">Cell wall</keyword>
<keyword id="KW-0175">Coiled coil</keyword>
<keyword id="KW-0449">Lipoprotein</keyword>
<keyword id="KW-0472">Membrane</keyword>
<keyword id="KW-0564">Palmitate</keyword>
<keyword id="KW-0572">Peptidoglycan-anchor</keyword>
<keyword id="KW-1185">Reference proteome</keyword>
<keyword id="KW-0677">Repeat</keyword>
<keyword id="KW-0964">Secreted</keyword>
<keyword id="KW-0732">Signal</keyword>